<keyword id="KW-0030">Aminoacyl-tRNA synthetase</keyword>
<keyword id="KW-0067">ATP-binding</keyword>
<keyword id="KW-0963">Cytoplasm</keyword>
<keyword id="KW-0436">Ligase</keyword>
<keyword id="KW-0547">Nucleotide-binding</keyword>
<keyword id="KW-0648">Protein biosynthesis</keyword>
<sequence length="879" mass="99797">MPTEANTYDPQRIESTAQHYWDSTHAFEVNEHSNKPKYYCLSMLPYPSGALHMGHVRNYTIGDVISRYKRMTGHNVLQPMGWDAFGLPAENAAIKNKVAPAQWTYKNIERMRTQLKSLGYAIDWSREFATCQPDYYVHEQHMFTRLMRKGLAYRRNALVNWDPVDQTVLANEQVIDGRGWRSGAPVEKREIPQWFLRITDYAQELLDGLNTLDDWPEPVKTMQRNWIGRSEGLEIQFEVRDADNNALEALRVFTTRPDTLLGVTFVSIAAEHPLALHAAKSNPALAGLLTEMKQGGLSEAELKTQEKRGMDTGLKAIHPITNEQLPVWVANFVLMAYGTGAVMAVPGHDQRDQEFANKYGLPIRQVIALKEPKNQDESTWEPDVWRDWYADKTREFELINSAEFDGLDYQDAFEVLAERFERQGRGQRRVNYRLRDWGVSRQRYWGCPIPVIYCPTCGAVPVPEDQLPVILPENVAFSGTGSPIKTDPEWRKTTCPECGGPAERETDTFDTFMESSWYYARYTSPNAHEMLDKRANYWLPVDQYIGGIEHAILHLMYFRFYHKLMRDARLVDSDEPAINLLTQGMVIAETFYRKNPDGSKDWINPADVNVECDERGRITGATLISDGQPVLIGATEKMSKSKNNGVDPQIMVTKYGADTVRLFSMFAAPPEQSLEWNEAGVEGMARFLRRLWTQVHHHAAHGPATALDITALDTAQKAMRCKTHNTIARVEDDYGRRRSFNTAIAAVMELSNTLARFDDTTTQSHAVRQEALETMVLLLNPITPHTSHALWQTLGHPETLLEDLPFPKIDTTALVRETTTLAVQVNGKLRGTIEVATDAPREHIENNARTEPNTARFLEGLTVLKIIIVPGKIVNIVAR</sequence>
<evidence type="ECO:0000255" key="1">
    <source>
        <dbReference type="HAMAP-Rule" id="MF_00049"/>
    </source>
</evidence>
<evidence type="ECO:0000305" key="2"/>
<feature type="chain" id="PRO_0000152122" description="Leucine--tRNA ligase">
    <location>
        <begin position="1"/>
        <end position="879"/>
    </location>
</feature>
<feature type="short sequence motif" description="'HIGH' region">
    <location>
        <begin position="45"/>
        <end position="55"/>
    </location>
</feature>
<feature type="short sequence motif" description="'KMSKS' region">
    <location>
        <begin position="637"/>
        <end position="641"/>
    </location>
</feature>
<feature type="binding site" evidence="1">
    <location>
        <position position="640"/>
    </location>
    <ligand>
        <name>ATP</name>
        <dbReference type="ChEBI" id="CHEBI:30616"/>
    </ligand>
</feature>
<protein>
    <recommendedName>
        <fullName evidence="1">Leucine--tRNA ligase</fullName>
        <ecNumber evidence="1">6.1.1.4</ecNumber>
    </recommendedName>
    <alternativeName>
        <fullName evidence="1">Leucyl-tRNA synthetase</fullName>
        <shortName evidence="1">LeuRS</shortName>
    </alternativeName>
</protein>
<dbReference type="EC" id="6.1.1.4" evidence="1"/>
<dbReference type="EMBL" id="AE003849">
    <property type="protein sequence ID" value="AAF84975.1"/>
    <property type="status" value="ALT_INIT"/>
    <property type="molecule type" value="Genomic_DNA"/>
</dbReference>
<dbReference type="PIR" id="E82590">
    <property type="entry name" value="E82590"/>
</dbReference>
<dbReference type="RefSeq" id="WP_023906350.1">
    <property type="nucleotide sequence ID" value="NC_002488.3"/>
</dbReference>
<dbReference type="SMR" id="Q9PBG8"/>
<dbReference type="STRING" id="160492.XF_2176"/>
<dbReference type="KEGG" id="xfa:XF_2176"/>
<dbReference type="eggNOG" id="COG0495">
    <property type="taxonomic scope" value="Bacteria"/>
</dbReference>
<dbReference type="HOGENOM" id="CLU_004427_0_0_6"/>
<dbReference type="Proteomes" id="UP000000812">
    <property type="component" value="Chromosome"/>
</dbReference>
<dbReference type="GO" id="GO:0005829">
    <property type="term" value="C:cytosol"/>
    <property type="evidence" value="ECO:0007669"/>
    <property type="project" value="TreeGrafter"/>
</dbReference>
<dbReference type="GO" id="GO:0002161">
    <property type="term" value="F:aminoacyl-tRNA deacylase activity"/>
    <property type="evidence" value="ECO:0007669"/>
    <property type="project" value="InterPro"/>
</dbReference>
<dbReference type="GO" id="GO:0005524">
    <property type="term" value="F:ATP binding"/>
    <property type="evidence" value="ECO:0007669"/>
    <property type="project" value="UniProtKB-UniRule"/>
</dbReference>
<dbReference type="GO" id="GO:0004823">
    <property type="term" value="F:leucine-tRNA ligase activity"/>
    <property type="evidence" value="ECO:0007669"/>
    <property type="project" value="UniProtKB-UniRule"/>
</dbReference>
<dbReference type="GO" id="GO:0006429">
    <property type="term" value="P:leucyl-tRNA aminoacylation"/>
    <property type="evidence" value="ECO:0007669"/>
    <property type="project" value="UniProtKB-UniRule"/>
</dbReference>
<dbReference type="CDD" id="cd07958">
    <property type="entry name" value="Anticodon_Ia_Leu_BEm"/>
    <property type="match status" value="1"/>
</dbReference>
<dbReference type="CDD" id="cd00812">
    <property type="entry name" value="LeuRS_core"/>
    <property type="match status" value="1"/>
</dbReference>
<dbReference type="FunFam" id="1.10.730.10:FF:000003">
    <property type="entry name" value="Leucine--tRNA ligase"/>
    <property type="match status" value="1"/>
</dbReference>
<dbReference type="FunFam" id="2.20.28.290:FF:000001">
    <property type="entry name" value="Leucine--tRNA ligase"/>
    <property type="match status" value="1"/>
</dbReference>
<dbReference type="FunFam" id="3.10.20.590:FF:000001">
    <property type="entry name" value="Leucine--tRNA ligase"/>
    <property type="match status" value="1"/>
</dbReference>
<dbReference type="FunFam" id="3.40.50.620:FF:000003">
    <property type="entry name" value="Leucine--tRNA ligase"/>
    <property type="match status" value="1"/>
</dbReference>
<dbReference type="FunFam" id="3.40.50.620:FF:000124">
    <property type="entry name" value="Leucine--tRNA ligase"/>
    <property type="match status" value="1"/>
</dbReference>
<dbReference type="FunFam" id="3.90.740.10:FF:000012">
    <property type="entry name" value="Leucine--tRNA ligase"/>
    <property type="match status" value="1"/>
</dbReference>
<dbReference type="Gene3D" id="2.20.28.290">
    <property type="match status" value="1"/>
</dbReference>
<dbReference type="Gene3D" id="3.10.20.590">
    <property type="match status" value="1"/>
</dbReference>
<dbReference type="Gene3D" id="3.40.50.620">
    <property type="entry name" value="HUPs"/>
    <property type="match status" value="2"/>
</dbReference>
<dbReference type="Gene3D" id="1.10.730.10">
    <property type="entry name" value="Isoleucyl-tRNA Synthetase, Domain 1"/>
    <property type="match status" value="1"/>
</dbReference>
<dbReference type="Gene3D" id="3.90.740.10">
    <property type="entry name" value="Valyl/Leucyl/Isoleucyl-tRNA synthetase, editing domain"/>
    <property type="match status" value="1"/>
</dbReference>
<dbReference type="HAMAP" id="MF_00049_B">
    <property type="entry name" value="Leu_tRNA_synth_B"/>
    <property type="match status" value="1"/>
</dbReference>
<dbReference type="InterPro" id="IPR001412">
    <property type="entry name" value="aa-tRNA-synth_I_CS"/>
</dbReference>
<dbReference type="InterPro" id="IPR002300">
    <property type="entry name" value="aa-tRNA-synth_Ia"/>
</dbReference>
<dbReference type="InterPro" id="IPR002302">
    <property type="entry name" value="Leu-tRNA-ligase"/>
</dbReference>
<dbReference type="InterPro" id="IPR025709">
    <property type="entry name" value="Leu_tRNA-synth_edit"/>
</dbReference>
<dbReference type="InterPro" id="IPR013155">
    <property type="entry name" value="M/V/L/I-tRNA-synth_anticd-bd"/>
</dbReference>
<dbReference type="InterPro" id="IPR015413">
    <property type="entry name" value="Methionyl/Leucyl_tRNA_Synth"/>
</dbReference>
<dbReference type="InterPro" id="IPR014729">
    <property type="entry name" value="Rossmann-like_a/b/a_fold"/>
</dbReference>
<dbReference type="InterPro" id="IPR009080">
    <property type="entry name" value="tRNAsynth_Ia_anticodon-bd"/>
</dbReference>
<dbReference type="InterPro" id="IPR009008">
    <property type="entry name" value="Val/Leu/Ile-tRNA-synth_edit"/>
</dbReference>
<dbReference type="NCBIfam" id="TIGR00396">
    <property type="entry name" value="leuS_bact"/>
    <property type="match status" value="1"/>
</dbReference>
<dbReference type="PANTHER" id="PTHR43740:SF2">
    <property type="entry name" value="LEUCINE--TRNA LIGASE, MITOCHONDRIAL"/>
    <property type="match status" value="1"/>
</dbReference>
<dbReference type="PANTHER" id="PTHR43740">
    <property type="entry name" value="LEUCYL-TRNA SYNTHETASE"/>
    <property type="match status" value="1"/>
</dbReference>
<dbReference type="Pfam" id="PF08264">
    <property type="entry name" value="Anticodon_1"/>
    <property type="match status" value="1"/>
</dbReference>
<dbReference type="Pfam" id="PF00133">
    <property type="entry name" value="tRNA-synt_1"/>
    <property type="match status" value="2"/>
</dbReference>
<dbReference type="Pfam" id="PF13603">
    <property type="entry name" value="tRNA-synt_1_2"/>
    <property type="match status" value="1"/>
</dbReference>
<dbReference type="Pfam" id="PF09334">
    <property type="entry name" value="tRNA-synt_1g"/>
    <property type="match status" value="1"/>
</dbReference>
<dbReference type="PRINTS" id="PR00985">
    <property type="entry name" value="TRNASYNTHLEU"/>
</dbReference>
<dbReference type="SUPFAM" id="SSF47323">
    <property type="entry name" value="Anticodon-binding domain of a subclass of class I aminoacyl-tRNA synthetases"/>
    <property type="match status" value="1"/>
</dbReference>
<dbReference type="SUPFAM" id="SSF52374">
    <property type="entry name" value="Nucleotidylyl transferase"/>
    <property type="match status" value="1"/>
</dbReference>
<dbReference type="SUPFAM" id="SSF50677">
    <property type="entry name" value="ValRS/IleRS/LeuRS editing domain"/>
    <property type="match status" value="1"/>
</dbReference>
<dbReference type="PROSITE" id="PS00178">
    <property type="entry name" value="AA_TRNA_LIGASE_I"/>
    <property type="match status" value="1"/>
</dbReference>
<reference key="1">
    <citation type="journal article" date="2000" name="Nature">
        <title>The genome sequence of the plant pathogen Xylella fastidiosa.</title>
        <authorList>
            <person name="Simpson A.J.G."/>
            <person name="Reinach F.C."/>
            <person name="Arruda P."/>
            <person name="Abreu F.A."/>
            <person name="Acencio M."/>
            <person name="Alvarenga R."/>
            <person name="Alves L.M.C."/>
            <person name="Araya J.E."/>
            <person name="Baia G.S."/>
            <person name="Baptista C.S."/>
            <person name="Barros M.H."/>
            <person name="Bonaccorsi E.D."/>
            <person name="Bordin S."/>
            <person name="Bove J.M."/>
            <person name="Briones M.R.S."/>
            <person name="Bueno M.R.P."/>
            <person name="Camargo A.A."/>
            <person name="Camargo L.E.A."/>
            <person name="Carraro D.M."/>
            <person name="Carrer H."/>
            <person name="Colauto N.B."/>
            <person name="Colombo C."/>
            <person name="Costa F.F."/>
            <person name="Costa M.C.R."/>
            <person name="Costa-Neto C.M."/>
            <person name="Coutinho L.L."/>
            <person name="Cristofani M."/>
            <person name="Dias-Neto E."/>
            <person name="Docena C."/>
            <person name="El-Dorry H."/>
            <person name="Facincani A.P."/>
            <person name="Ferreira A.J.S."/>
            <person name="Ferreira V.C.A."/>
            <person name="Ferro J.A."/>
            <person name="Fraga J.S."/>
            <person name="Franca S.C."/>
            <person name="Franco M.C."/>
            <person name="Frohme M."/>
            <person name="Furlan L.R."/>
            <person name="Garnier M."/>
            <person name="Goldman G.H."/>
            <person name="Goldman M.H.S."/>
            <person name="Gomes S.L."/>
            <person name="Gruber A."/>
            <person name="Ho P.L."/>
            <person name="Hoheisel J.D."/>
            <person name="Junqueira M.L."/>
            <person name="Kemper E.L."/>
            <person name="Kitajima J.P."/>
            <person name="Krieger J.E."/>
            <person name="Kuramae E.E."/>
            <person name="Laigret F."/>
            <person name="Lambais M.R."/>
            <person name="Leite L.C.C."/>
            <person name="Lemos E.G.M."/>
            <person name="Lemos M.V.F."/>
            <person name="Lopes S.A."/>
            <person name="Lopes C.R."/>
            <person name="Machado J.A."/>
            <person name="Machado M.A."/>
            <person name="Madeira A.M.B.N."/>
            <person name="Madeira H.M.F."/>
            <person name="Marino C.L."/>
            <person name="Marques M.V."/>
            <person name="Martins E.A.L."/>
            <person name="Martins E.M.F."/>
            <person name="Matsukuma A.Y."/>
            <person name="Menck C.F.M."/>
            <person name="Miracca E.C."/>
            <person name="Miyaki C.Y."/>
            <person name="Monteiro-Vitorello C.B."/>
            <person name="Moon D.H."/>
            <person name="Nagai M.A."/>
            <person name="Nascimento A.L.T.O."/>
            <person name="Netto L.E.S."/>
            <person name="Nhani A. Jr."/>
            <person name="Nobrega F.G."/>
            <person name="Nunes L.R."/>
            <person name="Oliveira M.A."/>
            <person name="de Oliveira M.C."/>
            <person name="de Oliveira R.C."/>
            <person name="Palmieri D.A."/>
            <person name="Paris A."/>
            <person name="Peixoto B.R."/>
            <person name="Pereira G.A.G."/>
            <person name="Pereira H.A. Jr."/>
            <person name="Pesquero J.B."/>
            <person name="Quaggio R.B."/>
            <person name="Roberto P.G."/>
            <person name="Rodrigues V."/>
            <person name="de Rosa A.J.M."/>
            <person name="de Rosa V.E. Jr."/>
            <person name="de Sa R.G."/>
            <person name="Santelli R.V."/>
            <person name="Sawasaki H.E."/>
            <person name="da Silva A.C.R."/>
            <person name="da Silva A.M."/>
            <person name="da Silva F.R."/>
            <person name="Silva W.A. Jr."/>
            <person name="da Silveira J.F."/>
            <person name="Silvestri M.L.Z."/>
            <person name="Siqueira W.J."/>
            <person name="de Souza A.A."/>
            <person name="de Souza A.P."/>
            <person name="Terenzi M.F."/>
            <person name="Truffi D."/>
            <person name="Tsai S.M."/>
            <person name="Tsuhako M.H."/>
            <person name="Vallada H."/>
            <person name="Van Sluys M.A."/>
            <person name="Verjovski-Almeida S."/>
            <person name="Vettore A.L."/>
            <person name="Zago M.A."/>
            <person name="Zatz M."/>
            <person name="Meidanis J."/>
            <person name="Setubal J.C."/>
        </authorList>
    </citation>
    <scope>NUCLEOTIDE SEQUENCE [LARGE SCALE GENOMIC DNA]</scope>
    <source>
        <strain>9a5c</strain>
    </source>
</reference>
<gene>
    <name evidence="1" type="primary">leuS</name>
    <name type="ordered locus">XF_2176</name>
</gene>
<accession>Q9PBG8</accession>
<name>SYL_XYLFA</name>
<comment type="catalytic activity">
    <reaction evidence="1">
        <text>tRNA(Leu) + L-leucine + ATP = L-leucyl-tRNA(Leu) + AMP + diphosphate</text>
        <dbReference type="Rhea" id="RHEA:11688"/>
        <dbReference type="Rhea" id="RHEA-COMP:9613"/>
        <dbReference type="Rhea" id="RHEA-COMP:9622"/>
        <dbReference type="ChEBI" id="CHEBI:30616"/>
        <dbReference type="ChEBI" id="CHEBI:33019"/>
        <dbReference type="ChEBI" id="CHEBI:57427"/>
        <dbReference type="ChEBI" id="CHEBI:78442"/>
        <dbReference type="ChEBI" id="CHEBI:78494"/>
        <dbReference type="ChEBI" id="CHEBI:456215"/>
        <dbReference type="EC" id="6.1.1.4"/>
    </reaction>
</comment>
<comment type="subcellular location">
    <subcellularLocation>
        <location evidence="1">Cytoplasm</location>
    </subcellularLocation>
</comment>
<comment type="similarity">
    <text evidence="1">Belongs to the class-I aminoacyl-tRNA synthetase family.</text>
</comment>
<comment type="sequence caution" evidence="2">
    <conflict type="erroneous initiation">
        <sequence resource="EMBL-CDS" id="AAF84975"/>
    </conflict>
</comment>
<organism>
    <name type="scientific">Xylella fastidiosa (strain 9a5c)</name>
    <dbReference type="NCBI Taxonomy" id="160492"/>
    <lineage>
        <taxon>Bacteria</taxon>
        <taxon>Pseudomonadati</taxon>
        <taxon>Pseudomonadota</taxon>
        <taxon>Gammaproteobacteria</taxon>
        <taxon>Lysobacterales</taxon>
        <taxon>Lysobacteraceae</taxon>
        <taxon>Xylella</taxon>
    </lineage>
</organism>
<proteinExistence type="inferred from homology"/>